<sequence>MACKRHSVSDPISKDLVECLRESMQRDLKFETPYVFVIFGASGDLAKKKIYPTLWWLFRDNLLPVNIKFIGYARSDLTVFKLRESFEKNCKVRENEKCAFDDFIKKCSYVQGQYDTSEGFQRLQSSIDDFQKESNNQAVNRLYYLALPPSVFNVVSTELKKNCMDHGDSWTRVIIEKPFGHDLKSSCELSTHLAKLFKEDQIYRIDHYLGKEMVQNLMVMRFGNRILAPSWNRDHIASVMISFKEDFGTGGRAGYFDTAGIIRDVMQNHLMQILTLVAMEKPASLNAEDIRDEKVKVLKAAKVVELKDVVVGQYIASPEFDHPEASQGYKDDKSVPADSTTPTYALAVVHINNERWEGVPFFLRCGKALNEKKAEVRIQFKEVSGDIYPSGELKRSELVMRVQPNEAVYMKLMTKKPGMGFGVEETELDLTYNNRFKEVRLPDAYERLFLEVFMGSQINFVRTDELEYAWRILTPVLEELKKKKVQPVQYKFGSRGPTEGDELMKKYGFIFTGTYKWVAPKL</sequence>
<accession>Q27464</accession>
<reference key="1">
    <citation type="journal article" date="1998" name="Science">
        <title>Genome sequence of the nematode C. elegans: a platform for investigating biology.</title>
        <authorList>
            <consortium name="The C. elegans sequencing consortium"/>
        </authorList>
    </citation>
    <scope>NUCLEOTIDE SEQUENCE [LARGE SCALE GENOMIC DNA]</scope>
    <source>
        <strain>Bristol N2</strain>
    </source>
</reference>
<name>G6PD_CAEEL</name>
<keyword id="KW-0119">Carbohydrate metabolism</keyword>
<keyword id="KW-0963">Cytoplasm</keyword>
<keyword id="KW-0313">Glucose metabolism</keyword>
<keyword id="KW-0521">NADP</keyword>
<keyword id="KW-0560">Oxidoreductase</keyword>
<keyword id="KW-1185">Reference proteome</keyword>
<proteinExistence type="inferred from homology"/>
<dbReference type="EC" id="1.1.1.49" evidence="2"/>
<dbReference type="EMBL" id="Z73102">
    <property type="protein sequence ID" value="CAA97412.1"/>
    <property type="molecule type" value="Genomic_DNA"/>
</dbReference>
<dbReference type="PIR" id="T18657">
    <property type="entry name" value="T18657"/>
</dbReference>
<dbReference type="RefSeq" id="NP_502129.1">
    <property type="nucleotide sequence ID" value="NM_069728.7"/>
</dbReference>
<dbReference type="SMR" id="Q27464"/>
<dbReference type="BioGRID" id="43145">
    <property type="interactions" value="19"/>
</dbReference>
<dbReference type="FunCoup" id="Q27464">
    <property type="interactions" value="1231"/>
</dbReference>
<dbReference type="STRING" id="6239.B0035.5.1"/>
<dbReference type="iPTMnet" id="Q27464"/>
<dbReference type="PaxDb" id="6239-B0035.5"/>
<dbReference type="PeptideAtlas" id="Q27464"/>
<dbReference type="EnsemblMetazoa" id="B0035.5.1">
    <property type="protein sequence ID" value="B0035.5.1"/>
    <property type="gene ID" value="WBGene00007108"/>
</dbReference>
<dbReference type="GeneID" id="178046"/>
<dbReference type="KEGG" id="cel:CELE_B0035.5"/>
<dbReference type="UCSC" id="B0035.5.1">
    <property type="organism name" value="c. elegans"/>
</dbReference>
<dbReference type="AGR" id="WB:WBGene00007108"/>
<dbReference type="CTD" id="178046"/>
<dbReference type="WormBase" id="B0035.5">
    <property type="protein sequence ID" value="CE05163"/>
    <property type="gene ID" value="WBGene00007108"/>
    <property type="gene designation" value="gspd-1"/>
</dbReference>
<dbReference type="eggNOG" id="KOG0563">
    <property type="taxonomic scope" value="Eukaryota"/>
</dbReference>
<dbReference type="GeneTree" id="ENSGT00530000063435"/>
<dbReference type="HOGENOM" id="CLU_013524_2_3_1"/>
<dbReference type="InParanoid" id="Q27464"/>
<dbReference type="OMA" id="ERAGYYE"/>
<dbReference type="OrthoDB" id="60984at2759"/>
<dbReference type="PhylomeDB" id="Q27464"/>
<dbReference type="Reactome" id="R-CEL-5628897">
    <property type="pathway name" value="TP53 Regulates Metabolic Genes"/>
</dbReference>
<dbReference type="Reactome" id="R-CEL-71336">
    <property type="pathway name" value="Pentose phosphate pathway"/>
</dbReference>
<dbReference type="UniPathway" id="UPA00115">
    <property type="reaction ID" value="UER00408"/>
</dbReference>
<dbReference type="PRO" id="PR:Q27464"/>
<dbReference type="Proteomes" id="UP000001940">
    <property type="component" value="Chromosome IV"/>
</dbReference>
<dbReference type="Bgee" id="WBGene00007108">
    <property type="expression patterns" value="Expressed in germ line (C elegans) and 4 other cell types or tissues"/>
</dbReference>
<dbReference type="GO" id="GO:0005829">
    <property type="term" value="C:cytosol"/>
    <property type="evidence" value="ECO:0000318"/>
    <property type="project" value="GO_Central"/>
</dbReference>
<dbReference type="GO" id="GO:0004345">
    <property type="term" value="F:glucose-6-phosphate dehydrogenase activity"/>
    <property type="evidence" value="ECO:0000250"/>
    <property type="project" value="UniProtKB"/>
</dbReference>
<dbReference type="GO" id="GO:0050661">
    <property type="term" value="F:NADP binding"/>
    <property type="evidence" value="ECO:0007669"/>
    <property type="project" value="InterPro"/>
</dbReference>
<dbReference type="GO" id="GO:0051156">
    <property type="term" value="P:glucose 6-phosphate metabolic process"/>
    <property type="evidence" value="ECO:0000250"/>
    <property type="project" value="UniProtKB"/>
</dbReference>
<dbReference type="GO" id="GO:0006006">
    <property type="term" value="P:glucose metabolic process"/>
    <property type="evidence" value="ECO:0000318"/>
    <property type="project" value="GO_Central"/>
</dbReference>
<dbReference type="GO" id="GO:0006739">
    <property type="term" value="P:NADP metabolic process"/>
    <property type="evidence" value="ECO:0000250"/>
    <property type="project" value="UniProtKB"/>
</dbReference>
<dbReference type="GO" id="GO:0009051">
    <property type="term" value="P:pentose-phosphate shunt, oxidative branch"/>
    <property type="evidence" value="ECO:0000318"/>
    <property type="project" value="GO_Central"/>
</dbReference>
<dbReference type="FunFam" id="3.30.360.10:FF:000013">
    <property type="entry name" value="Glucose-6-phosphate 1-dehydrogenase"/>
    <property type="match status" value="1"/>
</dbReference>
<dbReference type="FunFam" id="3.40.50.720:FF:000111">
    <property type="entry name" value="Glucose-6-phosphate 1-dehydrogenase"/>
    <property type="match status" value="1"/>
</dbReference>
<dbReference type="Gene3D" id="3.30.360.10">
    <property type="entry name" value="Dihydrodipicolinate Reductase, domain 2"/>
    <property type="match status" value="1"/>
</dbReference>
<dbReference type="Gene3D" id="3.40.50.720">
    <property type="entry name" value="NAD(P)-binding Rossmann-like Domain"/>
    <property type="match status" value="1"/>
</dbReference>
<dbReference type="HAMAP" id="MF_00966">
    <property type="entry name" value="G6PD"/>
    <property type="match status" value="1"/>
</dbReference>
<dbReference type="InterPro" id="IPR001282">
    <property type="entry name" value="G6P_DH"/>
</dbReference>
<dbReference type="InterPro" id="IPR019796">
    <property type="entry name" value="G6P_DH_AS"/>
</dbReference>
<dbReference type="InterPro" id="IPR022675">
    <property type="entry name" value="G6P_DH_C"/>
</dbReference>
<dbReference type="InterPro" id="IPR022674">
    <property type="entry name" value="G6P_DH_NAD-bd"/>
</dbReference>
<dbReference type="InterPro" id="IPR036291">
    <property type="entry name" value="NAD(P)-bd_dom_sf"/>
</dbReference>
<dbReference type="NCBIfam" id="TIGR00871">
    <property type="entry name" value="zwf"/>
    <property type="match status" value="1"/>
</dbReference>
<dbReference type="PANTHER" id="PTHR23429:SF0">
    <property type="entry name" value="GLUCOSE-6-PHOSPHATE 1-DEHYDROGENASE"/>
    <property type="match status" value="1"/>
</dbReference>
<dbReference type="PANTHER" id="PTHR23429">
    <property type="entry name" value="GLUCOSE-6-PHOSPHATE 1-DEHYDROGENASE G6PD"/>
    <property type="match status" value="1"/>
</dbReference>
<dbReference type="Pfam" id="PF02781">
    <property type="entry name" value="G6PD_C"/>
    <property type="match status" value="1"/>
</dbReference>
<dbReference type="Pfam" id="PF00479">
    <property type="entry name" value="G6PD_N"/>
    <property type="match status" value="1"/>
</dbReference>
<dbReference type="PIRSF" id="PIRSF000110">
    <property type="entry name" value="G6PD"/>
    <property type="match status" value="1"/>
</dbReference>
<dbReference type="PRINTS" id="PR00079">
    <property type="entry name" value="G6PDHDRGNASE"/>
</dbReference>
<dbReference type="SUPFAM" id="SSF55347">
    <property type="entry name" value="Glyceraldehyde-3-phosphate dehydrogenase-like, C-terminal domain"/>
    <property type="match status" value="1"/>
</dbReference>
<dbReference type="SUPFAM" id="SSF51735">
    <property type="entry name" value="NAD(P)-binding Rossmann-fold domains"/>
    <property type="match status" value="1"/>
</dbReference>
<dbReference type="PROSITE" id="PS00069">
    <property type="entry name" value="G6P_DEHYDROGENASE"/>
    <property type="match status" value="1"/>
</dbReference>
<evidence type="ECO:0000250" key="1">
    <source>
        <dbReference type="UniProtKB" id="P11411"/>
    </source>
</evidence>
<evidence type="ECO:0000250" key="2">
    <source>
        <dbReference type="UniProtKB" id="P11413"/>
    </source>
</evidence>
<evidence type="ECO:0000305" key="3"/>
<organism>
    <name type="scientific">Caenorhabditis elegans</name>
    <dbReference type="NCBI Taxonomy" id="6239"/>
    <lineage>
        <taxon>Eukaryota</taxon>
        <taxon>Metazoa</taxon>
        <taxon>Ecdysozoa</taxon>
        <taxon>Nematoda</taxon>
        <taxon>Chromadorea</taxon>
        <taxon>Rhabditida</taxon>
        <taxon>Rhabditina</taxon>
        <taxon>Rhabditomorpha</taxon>
        <taxon>Rhabditoidea</taxon>
        <taxon>Rhabditidae</taxon>
        <taxon>Peloderinae</taxon>
        <taxon>Caenorhabditis</taxon>
    </lineage>
</organism>
<comment type="function">
    <text evidence="2">Cytosolic glucose-6-phosphate dehydrogenase that catalyzes the first and rate-limiting step of the oxidative branch within the pentose phosphate pathway/shunt, an alternative route to glycolysis for the dissimilation of carbohydrates and a major source of reducing power and metabolic intermediates for fatty acid and nucleic acid biosynthetic processes.</text>
</comment>
<comment type="catalytic activity">
    <reaction evidence="2">
        <text>D-glucose 6-phosphate + NADP(+) = 6-phospho-D-glucono-1,5-lactone + NADPH + H(+)</text>
        <dbReference type="Rhea" id="RHEA:15841"/>
        <dbReference type="ChEBI" id="CHEBI:15378"/>
        <dbReference type="ChEBI" id="CHEBI:57783"/>
        <dbReference type="ChEBI" id="CHEBI:57955"/>
        <dbReference type="ChEBI" id="CHEBI:58349"/>
        <dbReference type="ChEBI" id="CHEBI:61548"/>
        <dbReference type="EC" id="1.1.1.49"/>
    </reaction>
    <physiologicalReaction direction="left-to-right" evidence="2">
        <dbReference type="Rhea" id="RHEA:15842"/>
    </physiologicalReaction>
</comment>
<comment type="pathway">
    <text evidence="2">Carbohydrate degradation; pentose phosphate pathway; D-ribulose 5-phosphate from D-glucose 6-phosphate (oxidative stage): step 1/3.</text>
</comment>
<comment type="subcellular location">
    <subcellularLocation>
        <location evidence="2">Cytoplasm</location>
        <location evidence="2">Cytosol</location>
    </subcellularLocation>
</comment>
<comment type="similarity">
    <text evidence="3">Belongs to the glucose-6-phosphate dehydrogenase family.</text>
</comment>
<gene>
    <name type="primary">gspd-1</name>
    <name type="ORF">B0035.5</name>
</gene>
<protein>
    <recommendedName>
        <fullName>Glucose-6-phosphate 1-dehydrogenase</fullName>
        <shortName>G6PD</shortName>
        <ecNumber evidence="2">1.1.1.49</ecNumber>
    </recommendedName>
</protein>
<feature type="chain" id="PRO_0000068089" description="Glucose-6-phosphate 1-dehydrogenase">
    <location>
        <begin position="1"/>
        <end position="522"/>
    </location>
</feature>
<feature type="active site" description="Proton acceptor" evidence="1">
    <location>
        <position position="269"/>
    </location>
</feature>
<feature type="binding site" evidence="2">
    <location>
        <begin position="40"/>
        <end position="47"/>
    </location>
    <ligand>
        <name>NADP(+)</name>
        <dbReference type="ChEBI" id="CHEBI:58349"/>
        <label>1</label>
    </ligand>
</feature>
<feature type="binding site" evidence="2">
    <location>
        <position position="74"/>
    </location>
    <ligand>
        <name>NADP(+)</name>
        <dbReference type="ChEBI" id="CHEBI:58349"/>
        <label>1</label>
    </ligand>
</feature>
<feature type="binding site" evidence="2">
    <location>
        <position position="177"/>
    </location>
    <ligand>
        <name>D-glucose 6-phosphate</name>
        <dbReference type="ChEBI" id="CHEBI:61548"/>
    </ligand>
</feature>
<feature type="binding site" evidence="2">
    <location>
        <position position="177"/>
    </location>
    <ligand>
        <name>NADP(+)</name>
        <dbReference type="ChEBI" id="CHEBI:58349"/>
        <label>1</label>
    </ligand>
</feature>
<feature type="binding site" evidence="2">
    <location>
        <begin position="207"/>
        <end position="211"/>
    </location>
    <ligand>
        <name>D-glucose 6-phosphate</name>
        <dbReference type="ChEBI" id="CHEBI:61548"/>
    </ligand>
</feature>
<feature type="binding site" evidence="2">
    <location>
        <position position="245"/>
    </location>
    <ligand>
        <name>D-glucose 6-phosphate</name>
        <dbReference type="ChEBI" id="CHEBI:61548"/>
    </ligand>
</feature>
<feature type="binding site" evidence="2">
    <location>
        <position position="264"/>
    </location>
    <ligand>
        <name>D-glucose 6-phosphate</name>
        <dbReference type="ChEBI" id="CHEBI:61548"/>
    </ligand>
</feature>
<feature type="binding site" evidence="2">
    <location>
        <position position="364"/>
    </location>
    <ligand>
        <name>NADP(+)</name>
        <dbReference type="ChEBI" id="CHEBI:58349"/>
        <label>2</label>
    </ligand>
</feature>
<feature type="binding site" evidence="2">
    <location>
        <position position="367"/>
    </location>
    <ligand>
        <name>D-glucose 6-phosphate</name>
        <dbReference type="ChEBI" id="CHEBI:61548"/>
    </ligand>
</feature>
<feature type="binding site" evidence="2">
    <location>
        <position position="372"/>
    </location>
    <ligand>
        <name>D-glucose 6-phosphate</name>
        <dbReference type="ChEBI" id="CHEBI:61548"/>
    </ligand>
</feature>
<feature type="binding site" evidence="2">
    <location>
        <position position="373"/>
    </location>
    <ligand>
        <name>NADP(+)</name>
        <dbReference type="ChEBI" id="CHEBI:58349"/>
        <label>2</label>
    </ligand>
</feature>
<feature type="binding site" evidence="2">
    <location>
        <position position="377"/>
    </location>
    <ligand>
        <name>NADP(+)</name>
        <dbReference type="ChEBI" id="CHEBI:58349"/>
        <label>2</label>
    </ligand>
</feature>
<feature type="binding site" evidence="2">
    <location>
        <position position="401"/>
    </location>
    <ligand>
        <name>NADP(+)</name>
        <dbReference type="ChEBI" id="CHEBI:58349"/>
        <label>2</label>
    </ligand>
</feature>
<feature type="binding site" evidence="2">
    <location>
        <position position="403"/>
    </location>
    <ligand>
        <name>D-glucose 6-phosphate</name>
        <dbReference type="ChEBI" id="CHEBI:61548"/>
    </ligand>
</feature>
<feature type="binding site" evidence="2">
    <location>
        <begin position="409"/>
        <end position="411"/>
    </location>
    <ligand>
        <name>NADP(+)</name>
        <dbReference type="ChEBI" id="CHEBI:58349"/>
        <label>2</label>
    </ligand>
</feature>
<feature type="binding site" evidence="2">
    <location>
        <begin position="429"/>
        <end position="431"/>
    </location>
    <ligand>
        <name>NADP(+)</name>
        <dbReference type="ChEBI" id="CHEBI:58349"/>
        <label>2</label>
    </ligand>
</feature>
<feature type="binding site" evidence="2">
    <location>
        <position position="495"/>
    </location>
    <ligand>
        <name>NADP(+)</name>
        <dbReference type="ChEBI" id="CHEBI:58349"/>
        <label>2</label>
    </ligand>
</feature>
<feature type="binding site" evidence="2">
    <location>
        <position position="517"/>
    </location>
    <ligand>
        <name>NADP(+)</name>
        <dbReference type="ChEBI" id="CHEBI:58349"/>
        <label>2</label>
    </ligand>
</feature>